<feature type="chain" id="PRO_1000185129" description="Crotonobetaine/carnitine--CoA ligase">
    <location>
        <begin position="1"/>
        <end position="517"/>
    </location>
</feature>
<comment type="function">
    <text evidence="1">Catalyzes the transfer of CoA to carnitine, generating the initial carnitinyl-CoA needed for the CaiB reaction cycle. Also has activity toward crotonobetaine and gamma-butyrobetaine.</text>
</comment>
<comment type="catalytic activity">
    <reaction evidence="1">
        <text>4-(trimethylamino)butanoate + ATP + CoA = 4-(trimethylamino)butanoyl-CoA + AMP + diphosphate</text>
        <dbReference type="Rhea" id="RHEA:55960"/>
        <dbReference type="ChEBI" id="CHEBI:16244"/>
        <dbReference type="ChEBI" id="CHEBI:30616"/>
        <dbReference type="ChEBI" id="CHEBI:33019"/>
        <dbReference type="ChEBI" id="CHEBI:57287"/>
        <dbReference type="ChEBI" id="CHEBI:61513"/>
        <dbReference type="ChEBI" id="CHEBI:456215"/>
        <dbReference type="EC" id="6.2.1.48"/>
    </reaction>
</comment>
<comment type="catalytic activity">
    <reaction evidence="1">
        <text>crotonobetaine + ATP + CoA = crotonobetainyl-CoA + AMP + diphosphate</text>
        <dbReference type="Rhea" id="RHEA:30079"/>
        <dbReference type="ChEBI" id="CHEBI:17237"/>
        <dbReference type="ChEBI" id="CHEBI:30616"/>
        <dbReference type="ChEBI" id="CHEBI:33019"/>
        <dbReference type="ChEBI" id="CHEBI:57287"/>
        <dbReference type="ChEBI" id="CHEBI:60933"/>
        <dbReference type="ChEBI" id="CHEBI:456215"/>
        <dbReference type="EC" id="6.2.1.48"/>
    </reaction>
</comment>
<comment type="catalytic activity">
    <reaction evidence="1">
        <text>(R)-carnitine + ATP + CoA = (R)-carnitinyl-CoA + AMP + diphosphate</text>
        <dbReference type="Rhea" id="RHEA:28514"/>
        <dbReference type="ChEBI" id="CHEBI:16347"/>
        <dbReference type="ChEBI" id="CHEBI:30616"/>
        <dbReference type="ChEBI" id="CHEBI:33019"/>
        <dbReference type="ChEBI" id="CHEBI:57287"/>
        <dbReference type="ChEBI" id="CHEBI:60932"/>
        <dbReference type="ChEBI" id="CHEBI:456215"/>
        <dbReference type="EC" id="6.2.1.48"/>
    </reaction>
</comment>
<comment type="pathway">
    <text evidence="1">Amine and polyamine metabolism; carnitine metabolism.</text>
</comment>
<comment type="similarity">
    <text evidence="1">Belongs to the ATP-dependent AMP-binding enzyme family.</text>
</comment>
<evidence type="ECO:0000255" key="1">
    <source>
        <dbReference type="HAMAP-Rule" id="MF_01524"/>
    </source>
</evidence>
<gene>
    <name evidence="1" type="primary">caiC</name>
    <name type="ordered locus">E2348C_0038</name>
</gene>
<protein>
    <recommendedName>
        <fullName evidence="1">Crotonobetaine/carnitine--CoA ligase</fullName>
        <ecNumber evidence="1">6.2.1.48</ecNumber>
    </recommendedName>
</protein>
<proteinExistence type="inferred from homology"/>
<sequence length="517" mass="58613">MDIIGGQHLRQMWDDLADVYGHKTALICESSSGVVNRYSYLELNQEINRTANLFYTLGIRKGDKVALHLDNCPEFIFCWFGLAKIGAIMVPINARLLREESTWILQNSQACLLVTSAQFYPMYQQIQQEDATQLRHICLTDVSLPADDGVSSFTQLKNQQPATLCYAPPLSTDDTAEILFTSGTTSRPKGVVITHYNLRFAGYYSAWQCALRDDDVYLTVMPAFHIDCQCTAAMAAFSTGATFVLVEKYSARAFWGQVQKYRATITECIPMMIRTLMVQPLSANDQQHRLREVMFYLNLSEQEKDAFCERFGVRLLTSYGMTETIVGIIGDRPGDKRRWPSIGQAGFCYEAEIRDDHNRPLPAGEIGEICIKGVPGKTIFKEYFLNPKATAKVLEADGWLHTGDTGYRDEEGFFYFVDRRCNMIKRGGENVSCVELENIIATHPKIQDIVVVGIKDSIRDEAIKAFVVLNEGETLSEEEFFCFCEQNMAKFKVLSYLEIRKDLPRNCSGKIIRKNLK</sequence>
<accession>B7UI83</accession>
<keyword id="KW-0436">Ligase</keyword>
<keyword id="KW-1185">Reference proteome</keyword>
<name>CAIC_ECO27</name>
<dbReference type="EC" id="6.2.1.48" evidence="1"/>
<dbReference type="EMBL" id="FM180568">
    <property type="protein sequence ID" value="CAS07586.1"/>
    <property type="molecule type" value="Genomic_DNA"/>
</dbReference>
<dbReference type="RefSeq" id="WP_012578833.1">
    <property type="nucleotide sequence ID" value="NC_011601.1"/>
</dbReference>
<dbReference type="SMR" id="B7UI83"/>
<dbReference type="KEGG" id="ecg:E2348C_0038"/>
<dbReference type="HOGENOM" id="CLU_000022_59_0_6"/>
<dbReference type="UniPathway" id="UPA00117"/>
<dbReference type="Proteomes" id="UP000008205">
    <property type="component" value="Chromosome"/>
</dbReference>
<dbReference type="GO" id="GO:0051108">
    <property type="term" value="F:carnitine-CoA ligase activity"/>
    <property type="evidence" value="ECO:0007669"/>
    <property type="project" value="InterPro"/>
</dbReference>
<dbReference type="GO" id="GO:0051109">
    <property type="term" value="F:crotonobetaine-CoA ligase activity"/>
    <property type="evidence" value="ECO:0007669"/>
    <property type="project" value="InterPro"/>
</dbReference>
<dbReference type="GO" id="GO:0031956">
    <property type="term" value="F:medium-chain fatty acid-CoA ligase activity"/>
    <property type="evidence" value="ECO:0007669"/>
    <property type="project" value="TreeGrafter"/>
</dbReference>
<dbReference type="GO" id="GO:0009437">
    <property type="term" value="P:carnitine metabolic process"/>
    <property type="evidence" value="ECO:0007669"/>
    <property type="project" value="UniProtKB-UniRule"/>
</dbReference>
<dbReference type="GO" id="GO:0006631">
    <property type="term" value="P:fatty acid metabolic process"/>
    <property type="evidence" value="ECO:0007669"/>
    <property type="project" value="TreeGrafter"/>
</dbReference>
<dbReference type="CDD" id="cd05934">
    <property type="entry name" value="FACL_DitJ_like"/>
    <property type="match status" value="1"/>
</dbReference>
<dbReference type="FunFam" id="3.30.300.30:FF:000011">
    <property type="entry name" value="Crotonobetaine/carnitine--CoA ligase"/>
    <property type="match status" value="1"/>
</dbReference>
<dbReference type="FunFam" id="3.40.50.12780:FF:000017">
    <property type="entry name" value="Crotonobetaine/carnitine--CoA ligase"/>
    <property type="match status" value="1"/>
</dbReference>
<dbReference type="Gene3D" id="3.30.300.30">
    <property type="match status" value="1"/>
</dbReference>
<dbReference type="Gene3D" id="3.40.50.12780">
    <property type="entry name" value="N-terminal domain of ligase-like"/>
    <property type="match status" value="1"/>
</dbReference>
<dbReference type="HAMAP" id="MF_01524">
    <property type="entry name" value="CaiC"/>
    <property type="match status" value="1"/>
</dbReference>
<dbReference type="InterPro" id="IPR025110">
    <property type="entry name" value="AMP-bd_C"/>
</dbReference>
<dbReference type="InterPro" id="IPR045851">
    <property type="entry name" value="AMP-bd_C_sf"/>
</dbReference>
<dbReference type="InterPro" id="IPR020845">
    <property type="entry name" value="AMP-binding_CS"/>
</dbReference>
<dbReference type="InterPro" id="IPR000873">
    <property type="entry name" value="AMP-dep_synth/lig_dom"/>
</dbReference>
<dbReference type="InterPro" id="IPR042099">
    <property type="entry name" value="ANL_N_sf"/>
</dbReference>
<dbReference type="InterPro" id="IPR023456">
    <property type="entry name" value="CaiC"/>
</dbReference>
<dbReference type="NCBIfam" id="NF005947">
    <property type="entry name" value="PRK08008.1"/>
    <property type="match status" value="1"/>
</dbReference>
<dbReference type="PANTHER" id="PTHR43201">
    <property type="entry name" value="ACYL-COA SYNTHETASE"/>
    <property type="match status" value="1"/>
</dbReference>
<dbReference type="PANTHER" id="PTHR43201:SF5">
    <property type="entry name" value="MEDIUM-CHAIN ACYL-COA LIGASE ACSF2, MITOCHONDRIAL"/>
    <property type="match status" value="1"/>
</dbReference>
<dbReference type="Pfam" id="PF00501">
    <property type="entry name" value="AMP-binding"/>
    <property type="match status" value="1"/>
</dbReference>
<dbReference type="Pfam" id="PF13193">
    <property type="entry name" value="AMP-binding_C"/>
    <property type="match status" value="1"/>
</dbReference>
<dbReference type="SUPFAM" id="SSF56801">
    <property type="entry name" value="Acetyl-CoA synthetase-like"/>
    <property type="match status" value="1"/>
</dbReference>
<dbReference type="PROSITE" id="PS00455">
    <property type="entry name" value="AMP_BINDING"/>
    <property type="match status" value="1"/>
</dbReference>
<reference key="1">
    <citation type="journal article" date="2009" name="J. Bacteriol.">
        <title>Complete genome sequence and comparative genome analysis of enteropathogenic Escherichia coli O127:H6 strain E2348/69.</title>
        <authorList>
            <person name="Iguchi A."/>
            <person name="Thomson N.R."/>
            <person name="Ogura Y."/>
            <person name="Saunders D."/>
            <person name="Ooka T."/>
            <person name="Henderson I.R."/>
            <person name="Harris D."/>
            <person name="Asadulghani M."/>
            <person name="Kurokawa K."/>
            <person name="Dean P."/>
            <person name="Kenny B."/>
            <person name="Quail M.A."/>
            <person name="Thurston S."/>
            <person name="Dougan G."/>
            <person name="Hayashi T."/>
            <person name="Parkhill J."/>
            <person name="Frankel G."/>
        </authorList>
    </citation>
    <scope>NUCLEOTIDE SEQUENCE [LARGE SCALE GENOMIC DNA]</scope>
    <source>
        <strain>E2348/69 / EPEC</strain>
    </source>
</reference>
<organism>
    <name type="scientific">Escherichia coli O127:H6 (strain E2348/69 / EPEC)</name>
    <dbReference type="NCBI Taxonomy" id="574521"/>
    <lineage>
        <taxon>Bacteria</taxon>
        <taxon>Pseudomonadati</taxon>
        <taxon>Pseudomonadota</taxon>
        <taxon>Gammaproteobacteria</taxon>
        <taxon>Enterobacterales</taxon>
        <taxon>Enterobacteriaceae</taxon>
        <taxon>Escherichia</taxon>
    </lineage>
</organism>